<protein>
    <recommendedName>
        <fullName evidence="1">3-hydroxydecanoyl-[acyl-carrier-protein] dehydratase</fullName>
        <ecNumber evidence="1">4.2.1.59</ecNumber>
    </recommendedName>
    <alternativeName>
        <fullName evidence="1">3-hydroxyacyl-[acyl-carrier-protein] dehydratase FabA</fullName>
    </alternativeName>
    <alternativeName>
        <fullName evidence="1">Beta-hydroxydecanoyl thioester dehydrase</fullName>
    </alternativeName>
    <alternativeName>
        <fullName evidence="1">Trans-2-decenoyl-[acyl-carrier-protein] isomerase</fullName>
        <ecNumber evidence="1">5.3.3.14</ecNumber>
    </alternativeName>
</protein>
<sequence length="171" mass="18987">MTKQHSFEREELLQCSQGELFGPGNAQLPAPNMLMLDRVVRICEEGGHYGKGELIAELDIHPDLWFFDCHFPGDPVMPGCLGLDAMWQLVGFHLGWLGHPGRGRALGCGEVKFSGQILPDANKVTYHIHMKRVITRRLILGIADGTVSVDGREIYQANDLRVGLFTSTANF</sequence>
<keyword id="KW-0963">Cytoplasm</keyword>
<keyword id="KW-0275">Fatty acid biosynthesis</keyword>
<keyword id="KW-0276">Fatty acid metabolism</keyword>
<keyword id="KW-0413">Isomerase</keyword>
<keyword id="KW-0444">Lipid biosynthesis</keyword>
<keyword id="KW-0443">Lipid metabolism</keyword>
<keyword id="KW-0456">Lyase</keyword>
<keyword id="KW-1185">Reference proteome</keyword>
<gene>
    <name evidence="1" type="primary">fabA</name>
    <name type="ordered locus">Csal_0457</name>
</gene>
<organism>
    <name type="scientific">Chromohalobacter salexigens (strain ATCC BAA-138 / DSM 3043 / CIP 106854 / NCIMB 13768 / 1H11)</name>
    <dbReference type="NCBI Taxonomy" id="290398"/>
    <lineage>
        <taxon>Bacteria</taxon>
        <taxon>Pseudomonadati</taxon>
        <taxon>Pseudomonadota</taxon>
        <taxon>Gammaproteobacteria</taxon>
        <taxon>Oceanospirillales</taxon>
        <taxon>Halomonadaceae</taxon>
        <taxon>Chromohalobacter</taxon>
    </lineage>
</organism>
<reference key="1">
    <citation type="journal article" date="2011" name="Stand. Genomic Sci.">
        <title>Complete genome sequence of the halophilic and highly halotolerant Chromohalobacter salexigens type strain (1H11(T)).</title>
        <authorList>
            <person name="Copeland A."/>
            <person name="O'Connor K."/>
            <person name="Lucas S."/>
            <person name="Lapidus A."/>
            <person name="Berry K.W."/>
            <person name="Detter J.C."/>
            <person name="Del Rio T.G."/>
            <person name="Hammon N."/>
            <person name="Dalin E."/>
            <person name="Tice H."/>
            <person name="Pitluck S."/>
            <person name="Bruce D."/>
            <person name="Goodwin L."/>
            <person name="Han C."/>
            <person name="Tapia R."/>
            <person name="Saunders E."/>
            <person name="Schmutz J."/>
            <person name="Brettin T."/>
            <person name="Larimer F."/>
            <person name="Land M."/>
            <person name="Hauser L."/>
            <person name="Vargas C."/>
            <person name="Nieto J.J."/>
            <person name="Kyrpides N.C."/>
            <person name="Ivanova N."/>
            <person name="Goker M."/>
            <person name="Klenk H.P."/>
            <person name="Csonka L.N."/>
            <person name="Woyke T."/>
        </authorList>
    </citation>
    <scope>NUCLEOTIDE SEQUENCE [LARGE SCALE GENOMIC DNA]</scope>
    <source>
        <strain>ATCC BAA-138 / DSM 3043 / CIP 106854 / NCIMB 13768 / 1H11</strain>
    </source>
</reference>
<accession>Q1R0D9</accession>
<evidence type="ECO:0000255" key="1">
    <source>
        <dbReference type="HAMAP-Rule" id="MF_00405"/>
    </source>
</evidence>
<evidence type="ECO:0000305" key="2"/>
<dbReference type="EC" id="4.2.1.59" evidence="1"/>
<dbReference type="EC" id="5.3.3.14" evidence="1"/>
<dbReference type="EMBL" id="CP000285">
    <property type="protein sequence ID" value="ABE57819.1"/>
    <property type="status" value="ALT_INIT"/>
    <property type="molecule type" value="Genomic_DNA"/>
</dbReference>
<dbReference type="RefSeq" id="WP_011505765.1">
    <property type="nucleotide sequence ID" value="NC_007963.1"/>
</dbReference>
<dbReference type="SMR" id="Q1R0D9"/>
<dbReference type="STRING" id="290398.Csal_0457"/>
<dbReference type="GeneID" id="95333209"/>
<dbReference type="KEGG" id="csa:Csal_0457"/>
<dbReference type="eggNOG" id="COG0764">
    <property type="taxonomic scope" value="Bacteria"/>
</dbReference>
<dbReference type="HOGENOM" id="CLU_097925_0_0_6"/>
<dbReference type="OrthoDB" id="9786735at2"/>
<dbReference type="UniPathway" id="UPA00094"/>
<dbReference type="Proteomes" id="UP000000239">
    <property type="component" value="Chromosome"/>
</dbReference>
<dbReference type="GO" id="GO:0005737">
    <property type="term" value="C:cytoplasm"/>
    <property type="evidence" value="ECO:0007669"/>
    <property type="project" value="UniProtKB-SubCell"/>
</dbReference>
<dbReference type="GO" id="GO:0019171">
    <property type="term" value="F:(3R)-hydroxyacyl-[acyl-carrier-protein] dehydratase activity"/>
    <property type="evidence" value="ECO:0007669"/>
    <property type="project" value="UniProtKB-UniRule"/>
</dbReference>
<dbReference type="GO" id="GO:0034017">
    <property type="term" value="F:trans-2-decenoyl-acyl-carrier-protein isomerase activity"/>
    <property type="evidence" value="ECO:0007669"/>
    <property type="project" value="UniProtKB-UniRule"/>
</dbReference>
<dbReference type="GO" id="GO:0006636">
    <property type="term" value="P:unsaturated fatty acid biosynthetic process"/>
    <property type="evidence" value="ECO:0007669"/>
    <property type="project" value="UniProtKB-UniRule"/>
</dbReference>
<dbReference type="CDD" id="cd01287">
    <property type="entry name" value="FabA"/>
    <property type="match status" value="1"/>
</dbReference>
<dbReference type="Gene3D" id="3.10.129.10">
    <property type="entry name" value="Hotdog Thioesterase"/>
    <property type="match status" value="1"/>
</dbReference>
<dbReference type="HAMAP" id="MF_00405">
    <property type="entry name" value="FabA"/>
    <property type="match status" value="1"/>
</dbReference>
<dbReference type="InterPro" id="IPR010083">
    <property type="entry name" value="FabA"/>
</dbReference>
<dbReference type="InterPro" id="IPR013114">
    <property type="entry name" value="FabA_FabZ"/>
</dbReference>
<dbReference type="InterPro" id="IPR029069">
    <property type="entry name" value="HotDog_dom_sf"/>
</dbReference>
<dbReference type="NCBIfam" id="TIGR01749">
    <property type="entry name" value="fabA"/>
    <property type="match status" value="1"/>
</dbReference>
<dbReference type="NCBIfam" id="NF003509">
    <property type="entry name" value="PRK05174.1"/>
    <property type="match status" value="1"/>
</dbReference>
<dbReference type="PANTHER" id="PTHR30272">
    <property type="entry name" value="3-HYDROXYACYL-[ACYL-CARRIER-PROTEIN] DEHYDRATASE"/>
    <property type="match status" value="1"/>
</dbReference>
<dbReference type="PANTHER" id="PTHR30272:SF8">
    <property type="entry name" value="3-HYDROXYDECANOYL-[ACYL-CARRIER-PROTEIN] DEHYDRATASE"/>
    <property type="match status" value="1"/>
</dbReference>
<dbReference type="Pfam" id="PF07977">
    <property type="entry name" value="FabA"/>
    <property type="match status" value="1"/>
</dbReference>
<dbReference type="SUPFAM" id="SSF54637">
    <property type="entry name" value="Thioesterase/thiol ester dehydrase-isomerase"/>
    <property type="match status" value="1"/>
</dbReference>
<feature type="chain" id="PRO_0000267725" description="3-hydroxydecanoyl-[acyl-carrier-protein] dehydratase">
    <location>
        <begin position="1"/>
        <end position="171"/>
    </location>
</feature>
<feature type="active site" evidence="1">
    <location>
        <position position="70"/>
    </location>
</feature>
<comment type="function">
    <text evidence="1">Necessary for the introduction of cis unsaturation into fatty acids. Catalyzes the dehydration of (3R)-3-hydroxydecanoyl-ACP to E-(2)-decenoyl-ACP and then its isomerization to Z-(3)-decenoyl-ACP. Can catalyze the dehydratase reaction for beta-hydroxyacyl-ACPs with saturated chain lengths up to 16:0, being most active on intermediate chain length.</text>
</comment>
<comment type="catalytic activity">
    <reaction evidence="1">
        <text>a (3R)-hydroxyacyl-[ACP] = a (2E)-enoyl-[ACP] + H2O</text>
        <dbReference type="Rhea" id="RHEA:13097"/>
        <dbReference type="Rhea" id="RHEA-COMP:9925"/>
        <dbReference type="Rhea" id="RHEA-COMP:9945"/>
        <dbReference type="ChEBI" id="CHEBI:15377"/>
        <dbReference type="ChEBI" id="CHEBI:78784"/>
        <dbReference type="ChEBI" id="CHEBI:78827"/>
        <dbReference type="EC" id="4.2.1.59"/>
    </reaction>
</comment>
<comment type="catalytic activity">
    <reaction evidence="1">
        <text>(3R)-hydroxydecanoyl-[ACP] = (2E)-decenoyl-[ACP] + H2O</text>
        <dbReference type="Rhea" id="RHEA:41860"/>
        <dbReference type="Rhea" id="RHEA-COMP:9638"/>
        <dbReference type="Rhea" id="RHEA-COMP:9639"/>
        <dbReference type="ChEBI" id="CHEBI:15377"/>
        <dbReference type="ChEBI" id="CHEBI:78466"/>
        <dbReference type="ChEBI" id="CHEBI:78467"/>
    </reaction>
</comment>
<comment type="catalytic activity">
    <reaction evidence="1">
        <text>(2E)-decenoyl-[ACP] = (3Z)-decenoyl-[ACP]</text>
        <dbReference type="Rhea" id="RHEA:23568"/>
        <dbReference type="Rhea" id="RHEA-COMP:9639"/>
        <dbReference type="Rhea" id="RHEA-COMP:9927"/>
        <dbReference type="ChEBI" id="CHEBI:78467"/>
        <dbReference type="ChEBI" id="CHEBI:78798"/>
        <dbReference type="EC" id="5.3.3.14"/>
    </reaction>
</comment>
<comment type="pathway">
    <text evidence="1">Lipid metabolism; fatty acid biosynthesis.</text>
</comment>
<comment type="subunit">
    <text evidence="1">Homodimer.</text>
</comment>
<comment type="subcellular location">
    <subcellularLocation>
        <location evidence="1">Cytoplasm</location>
    </subcellularLocation>
</comment>
<comment type="similarity">
    <text evidence="1">Belongs to the thioester dehydratase family. FabA subfamily.</text>
</comment>
<comment type="sequence caution" evidence="2">
    <conflict type="erroneous initiation">
        <sequence resource="EMBL-CDS" id="ABE57819"/>
    </conflict>
</comment>
<proteinExistence type="inferred from homology"/>
<name>FABA_CHRSD</name>